<dbReference type="EMBL" id="ACFL01000033">
    <property type="protein sequence ID" value="EEU08482.1"/>
    <property type="molecule type" value="Genomic_DNA"/>
</dbReference>
<dbReference type="SMR" id="C7GL28"/>
<dbReference type="Proteomes" id="UP000008073">
    <property type="component" value="Unassembled WGS sequence"/>
</dbReference>
<dbReference type="GO" id="GO:0005743">
    <property type="term" value="C:mitochondrial inner membrane"/>
    <property type="evidence" value="ECO:0007669"/>
    <property type="project" value="UniProtKB-SubCell"/>
</dbReference>
<dbReference type="GO" id="GO:0140053">
    <property type="term" value="P:mitochondrial gene expression"/>
    <property type="evidence" value="ECO:0007669"/>
    <property type="project" value="InterPro"/>
</dbReference>
<dbReference type="GO" id="GO:0048255">
    <property type="term" value="P:mRNA stabilization"/>
    <property type="evidence" value="ECO:0007669"/>
    <property type="project" value="InterPro"/>
</dbReference>
<dbReference type="Gene3D" id="3.30.460.10">
    <property type="entry name" value="Beta Polymerase, domain 2"/>
    <property type="match status" value="1"/>
</dbReference>
<dbReference type="InterPro" id="IPR040152">
    <property type="entry name" value="Atp25"/>
</dbReference>
<dbReference type="InterPro" id="IPR025210">
    <property type="entry name" value="ATP25_mRNA_stabil_dom"/>
</dbReference>
<dbReference type="InterPro" id="IPR043519">
    <property type="entry name" value="NT_sf"/>
</dbReference>
<dbReference type="PANTHER" id="PTHR28087">
    <property type="entry name" value="ATPASE SYNTHESIS PROTEIN 25, MITOCHONDRIAL"/>
    <property type="match status" value="1"/>
</dbReference>
<dbReference type="PANTHER" id="PTHR28087:SF1">
    <property type="entry name" value="ATPASE SYNTHESIS PROTEIN 25, MITOCHONDRIAL"/>
    <property type="match status" value="1"/>
</dbReference>
<dbReference type="Pfam" id="PF13929">
    <property type="entry name" value="mRNA_stabil"/>
    <property type="match status" value="1"/>
</dbReference>
<dbReference type="Pfam" id="PF02410">
    <property type="entry name" value="RsfS"/>
    <property type="match status" value="1"/>
</dbReference>
<dbReference type="SUPFAM" id="SSF81301">
    <property type="entry name" value="Nucleotidyltransferase"/>
    <property type="match status" value="1"/>
</dbReference>
<feature type="transit peptide" description="Mitochondrion" evidence="2">
    <location>
        <begin position="1"/>
        <end position="14"/>
    </location>
</feature>
<feature type="chain" id="PRO_0000404493" description="ATPase synthesis protein 25, mitochondrial">
    <location>
        <begin position="15"/>
        <end position="612"/>
    </location>
</feature>
<keyword id="KW-0472">Membrane</keyword>
<keyword id="KW-0496">Mitochondrion</keyword>
<keyword id="KW-0999">Mitochondrion inner membrane</keyword>
<keyword id="KW-0809">Transit peptide</keyword>
<comment type="function">
    <text evidence="1">mRNA stabilization factor specific for the 0.95 kb OLI1 mRNA. Also involved in OLI1 ring formation (By similarity).</text>
</comment>
<comment type="subcellular location">
    <subcellularLocation>
        <location evidence="1">Mitochondrion inner membrane</location>
        <topology evidence="1">Peripheral membrane protein</topology>
        <orientation evidence="1">Matrix side</orientation>
    </subcellularLocation>
</comment>
<comment type="similarity">
    <text evidence="3">Belongs to the ATP25 family.</text>
</comment>
<organism>
    <name type="scientific">Saccharomyces cerevisiae (strain JAY291)</name>
    <name type="common">Baker's yeast</name>
    <dbReference type="NCBI Taxonomy" id="574961"/>
    <lineage>
        <taxon>Eukaryota</taxon>
        <taxon>Fungi</taxon>
        <taxon>Dikarya</taxon>
        <taxon>Ascomycota</taxon>
        <taxon>Saccharomycotina</taxon>
        <taxon>Saccharomycetes</taxon>
        <taxon>Saccharomycetales</taxon>
        <taxon>Saccharomycetaceae</taxon>
        <taxon>Saccharomyces</taxon>
    </lineage>
</organism>
<sequence length="612" mass="70414">MNKFCLLPFHGKRIGVANIPFTILFKKGPYFLHSHITAVYYSTKGKNDSHEQSRVSKKSTFTPLETPWYLRIVDNEKELMEGKKNNHHTMNKELEIPKTSPNSLRKIADLLTGKLGLDDFLVFDLRKKSPNSVSAVNKLGDFMVICTARSTKHCHKSFLELNKFLKHEFCSSAYVEGNFNERQESRRKRRLARKSNLSKLLGRSSECSAKDLNSEAWYMIDCRVDGIFVNILTQRRRNELNLEELYAPENEKSKFQNIDSGNVPTISGVNEISSNNNILLGLRRLAQQRRRYSTINPNGLSNLRYFLQKEDFKGANKIIQSSSGTETHNIRTLEHVKNTLKDLVGQERKVDVVQWKSLFDEHSTFLTINQSAAYWPLRLEYAILLNKADPQFYSDRVFLKDYLLLKKSLGQELIREDLIALLEMVLKTQHSSHSYFNLVKQNRVIIRALNLFKGLQTEDDGSVVYDEVVISLLLNSMVADERVKLRSLYETIDHIFQTFGDKLTSGMIVSILQNLAKIKDWNKLLQVWEAITPTEGEGQDKRPWNEFINVINQSGDSHVISKIVNNGHLLWIRRLNVNVTPELCNSIKALLKTAGMENSTLEEFLVRGTNNQ</sequence>
<evidence type="ECO:0000250" key="1"/>
<evidence type="ECO:0000255" key="2"/>
<evidence type="ECO:0000305" key="3"/>
<proteinExistence type="inferred from homology"/>
<name>ATP25_YEAS2</name>
<accession>C7GL28</accession>
<reference key="1">
    <citation type="journal article" date="2009" name="Genome Res.">
        <title>Genome structure of a Saccharomyces cerevisiae strain widely used in bioethanol production.</title>
        <authorList>
            <person name="Argueso J.L."/>
            <person name="Carazzolle M.F."/>
            <person name="Mieczkowski P.A."/>
            <person name="Duarte F.M."/>
            <person name="Netto O.V.C."/>
            <person name="Missawa S.K."/>
            <person name="Galzerani F."/>
            <person name="Costa G.G.L."/>
            <person name="Vidal R.O."/>
            <person name="Noronha M.F."/>
            <person name="Dominska M."/>
            <person name="Andrietta M.G.S."/>
            <person name="Andrietta S.R."/>
            <person name="Cunha A.F."/>
            <person name="Gomes L.H."/>
            <person name="Tavares F.C.A."/>
            <person name="Alcarde A.R."/>
            <person name="Dietrich F.S."/>
            <person name="McCusker J.H."/>
            <person name="Petes T.D."/>
            <person name="Pereira G.A.G."/>
        </authorList>
    </citation>
    <scope>NUCLEOTIDE SEQUENCE [LARGE SCALE GENOMIC DNA]</scope>
    <source>
        <strain>JAY291</strain>
    </source>
</reference>
<gene>
    <name type="primary">ATP25</name>
    <name type="ORF">C1Q_01031</name>
</gene>
<protein>
    <recommendedName>
        <fullName>ATPase synthesis protein 25, mitochondrial</fullName>
    </recommendedName>
    <alternativeName>
        <fullName>OLI1 mRNA stabilization factor</fullName>
    </alternativeName>
</protein>